<dbReference type="EC" id="1.1.1.267" evidence="1"/>
<dbReference type="EMBL" id="BA000003">
    <property type="protein sequence ID" value="BAB12950.1"/>
    <property type="molecule type" value="Genomic_DNA"/>
</dbReference>
<dbReference type="RefSeq" id="NP_240064.1">
    <property type="nucleotide sequence ID" value="NC_002528.1"/>
</dbReference>
<dbReference type="RefSeq" id="WP_010896018.1">
    <property type="nucleotide sequence ID" value="NC_002528.1"/>
</dbReference>
<dbReference type="SMR" id="P57329"/>
<dbReference type="STRING" id="563178.BUAP5A_230"/>
<dbReference type="EnsemblBacteria" id="BAB12950">
    <property type="protein sequence ID" value="BAB12950"/>
    <property type="gene ID" value="BAB12950"/>
</dbReference>
<dbReference type="KEGG" id="buc:BU235"/>
<dbReference type="PATRIC" id="fig|107806.10.peg.248"/>
<dbReference type="eggNOG" id="COG0743">
    <property type="taxonomic scope" value="Bacteria"/>
</dbReference>
<dbReference type="HOGENOM" id="CLU_035714_0_1_6"/>
<dbReference type="UniPathway" id="UPA00056">
    <property type="reaction ID" value="UER00092"/>
</dbReference>
<dbReference type="Proteomes" id="UP000001806">
    <property type="component" value="Chromosome"/>
</dbReference>
<dbReference type="GO" id="GO:0030604">
    <property type="term" value="F:1-deoxy-D-xylulose-5-phosphate reductoisomerase activity"/>
    <property type="evidence" value="ECO:0007669"/>
    <property type="project" value="UniProtKB-UniRule"/>
</dbReference>
<dbReference type="GO" id="GO:0030145">
    <property type="term" value="F:manganese ion binding"/>
    <property type="evidence" value="ECO:0007669"/>
    <property type="project" value="TreeGrafter"/>
</dbReference>
<dbReference type="GO" id="GO:0070402">
    <property type="term" value="F:NADPH binding"/>
    <property type="evidence" value="ECO:0007669"/>
    <property type="project" value="InterPro"/>
</dbReference>
<dbReference type="GO" id="GO:0051484">
    <property type="term" value="P:isopentenyl diphosphate biosynthetic process, methylerythritol 4-phosphate pathway involved in terpenoid biosynthetic process"/>
    <property type="evidence" value="ECO:0007669"/>
    <property type="project" value="TreeGrafter"/>
</dbReference>
<dbReference type="FunFam" id="1.10.1740.10:FF:000004">
    <property type="entry name" value="1-deoxy-D-xylulose 5-phosphate reductoisomerase"/>
    <property type="match status" value="1"/>
</dbReference>
<dbReference type="FunFam" id="3.40.50.720:FF:000045">
    <property type="entry name" value="1-deoxy-D-xylulose 5-phosphate reductoisomerase"/>
    <property type="match status" value="1"/>
</dbReference>
<dbReference type="Gene3D" id="1.10.1740.10">
    <property type="match status" value="1"/>
</dbReference>
<dbReference type="Gene3D" id="3.40.50.720">
    <property type="entry name" value="NAD(P)-binding Rossmann-like Domain"/>
    <property type="match status" value="1"/>
</dbReference>
<dbReference type="HAMAP" id="MF_00183">
    <property type="entry name" value="DXP_reductoisom"/>
    <property type="match status" value="1"/>
</dbReference>
<dbReference type="InterPro" id="IPR003821">
    <property type="entry name" value="DXP_reductoisomerase"/>
</dbReference>
<dbReference type="InterPro" id="IPR013644">
    <property type="entry name" value="DXP_reductoisomerase_C"/>
</dbReference>
<dbReference type="InterPro" id="IPR013512">
    <property type="entry name" value="DXP_reductoisomerase_N"/>
</dbReference>
<dbReference type="InterPro" id="IPR026877">
    <property type="entry name" value="DXPR_C"/>
</dbReference>
<dbReference type="InterPro" id="IPR036169">
    <property type="entry name" value="DXPR_C_sf"/>
</dbReference>
<dbReference type="InterPro" id="IPR036291">
    <property type="entry name" value="NAD(P)-bd_dom_sf"/>
</dbReference>
<dbReference type="NCBIfam" id="TIGR00243">
    <property type="entry name" value="Dxr"/>
    <property type="match status" value="1"/>
</dbReference>
<dbReference type="NCBIfam" id="NF003938">
    <property type="entry name" value="PRK05447.1-1"/>
    <property type="match status" value="1"/>
</dbReference>
<dbReference type="PANTHER" id="PTHR30525">
    <property type="entry name" value="1-DEOXY-D-XYLULOSE 5-PHOSPHATE REDUCTOISOMERASE"/>
    <property type="match status" value="1"/>
</dbReference>
<dbReference type="PANTHER" id="PTHR30525:SF0">
    <property type="entry name" value="1-DEOXY-D-XYLULOSE 5-PHOSPHATE REDUCTOISOMERASE, CHLOROPLASTIC"/>
    <property type="match status" value="1"/>
</dbReference>
<dbReference type="Pfam" id="PF08436">
    <property type="entry name" value="DXP_redisom_C"/>
    <property type="match status" value="1"/>
</dbReference>
<dbReference type="Pfam" id="PF02670">
    <property type="entry name" value="DXP_reductoisom"/>
    <property type="match status" value="1"/>
</dbReference>
<dbReference type="Pfam" id="PF13288">
    <property type="entry name" value="DXPR_C"/>
    <property type="match status" value="1"/>
</dbReference>
<dbReference type="PIRSF" id="PIRSF006205">
    <property type="entry name" value="Dxp_reductismrs"/>
    <property type="match status" value="1"/>
</dbReference>
<dbReference type="SUPFAM" id="SSF69055">
    <property type="entry name" value="1-deoxy-D-xylulose-5-phosphate reductoisomerase, C-terminal domain"/>
    <property type="match status" value="1"/>
</dbReference>
<dbReference type="SUPFAM" id="SSF55347">
    <property type="entry name" value="Glyceraldehyde-3-phosphate dehydrogenase-like, C-terminal domain"/>
    <property type="match status" value="1"/>
</dbReference>
<dbReference type="SUPFAM" id="SSF51735">
    <property type="entry name" value="NAD(P)-binding Rossmann-fold domains"/>
    <property type="match status" value="1"/>
</dbReference>
<organism>
    <name type="scientific">Buchnera aphidicola subsp. Acyrthosiphon pisum (strain APS)</name>
    <name type="common">Acyrthosiphon pisum symbiotic bacterium</name>
    <dbReference type="NCBI Taxonomy" id="107806"/>
    <lineage>
        <taxon>Bacteria</taxon>
        <taxon>Pseudomonadati</taxon>
        <taxon>Pseudomonadota</taxon>
        <taxon>Gammaproteobacteria</taxon>
        <taxon>Enterobacterales</taxon>
        <taxon>Erwiniaceae</taxon>
        <taxon>Buchnera</taxon>
    </lineage>
</organism>
<keyword id="KW-0414">Isoprene biosynthesis</keyword>
<keyword id="KW-0464">Manganese</keyword>
<keyword id="KW-0479">Metal-binding</keyword>
<keyword id="KW-0521">NADP</keyword>
<keyword id="KW-0560">Oxidoreductase</keyword>
<keyword id="KW-1185">Reference proteome</keyword>
<accession>P57329</accession>
<sequence length="398" mass="44187">MKKITILGSTGSIGINALSIIQKNPDLFKVIALVANKNFSIMLRQCELFSPDWVAMRDEKSAHILRKKLKHSKINTQVLTGEKDICALAALEETDHVISAIVGMAGLLPTLSAIHAGKTILLANKESLITSGYFFMKALSSSGAKIIPIDSEHNAIFQVLPLEIQKNLGKTTLEKNSIKHLVLTGSGGPFYKFSSSDLSNVTPDQACSHPNWLMGKKISVDSATMMNKGLEYAEARWLFNALESEIKILIHPESIIHSMVQYYDGSLLAQLSVPDIRTSISYAMSWPDRICTEVDYLNFYKINNLTFFEPDFTQFPCLKLAIDAFSQGQASMTVLNAANEIAVSSFLDSKISFTKIYEINMEILMSSCFSEPKCIQDILEIDRKVRILAKNKVSSLIF</sequence>
<feature type="chain" id="PRO_0000163622" description="1-deoxy-D-xylulose 5-phosphate reductoisomerase">
    <location>
        <begin position="1"/>
        <end position="398"/>
    </location>
</feature>
<feature type="binding site" evidence="1">
    <location>
        <position position="10"/>
    </location>
    <ligand>
        <name>NADPH</name>
        <dbReference type="ChEBI" id="CHEBI:57783"/>
    </ligand>
</feature>
<feature type="binding site" evidence="1">
    <location>
        <position position="11"/>
    </location>
    <ligand>
        <name>NADPH</name>
        <dbReference type="ChEBI" id="CHEBI:57783"/>
    </ligand>
</feature>
<feature type="binding site" evidence="1">
    <location>
        <position position="12"/>
    </location>
    <ligand>
        <name>NADPH</name>
        <dbReference type="ChEBI" id="CHEBI:57783"/>
    </ligand>
</feature>
<feature type="binding site" evidence="1">
    <location>
        <position position="13"/>
    </location>
    <ligand>
        <name>NADPH</name>
        <dbReference type="ChEBI" id="CHEBI:57783"/>
    </ligand>
</feature>
<feature type="binding site" evidence="1">
    <location>
        <position position="37"/>
    </location>
    <ligand>
        <name>NADPH</name>
        <dbReference type="ChEBI" id="CHEBI:57783"/>
    </ligand>
</feature>
<feature type="binding site" evidence="1">
    <location>
        <position position="38"/>
    </location>
    <ligand>
        <name>NADPH</name>
        <dbReference type="ChEBI" id="CHEBI:57783"/>
    </ligand>
</feature>
<feature type="binding site" evidence="1">
    <location>
        <position position="124"/>
    </location>
    <ligand>
        <name>NADPH</name>
        <dbReference type="ChEBI" id="CHEBI:57783"/>
    </ligand>
</feature>
<feature type="binding site" evidence="1">
    <location>
        <position position="125"/>
    </location>
    <ligand>
        <name>1-deoxy-D-xylulose 5-phosphate</name>
        <dbReference type="ChEBI" id="CHEBI:57792"/>
    </ligand>
</feature>
<feature type="binding site" evidence="1">
    <location>
        <position position="126"/>
    </location>
    <ligand>
        <name>NADPH</name>
        <dbReference type="ChEBI" id="CHEBI:57783"/>
    </ligand>
</feature>
<feature type="binding site" evidence="1">
    <location>
        <position position="150"/>
    </location>
    <ligand>
        <name>Mn(2+)</name>
        <dbReference type="ChEBI" id="CHEBI:29035"/>
    </ligand>
</feature>
<feature type="binding site" evidence="1">
    <location>
        <position position="151"/>
    </location>
    <ligand>
        <name>1-deoxy-D-xylulose 5-phosphate</name>
        <dbReference type="ChEBI" id="CHEBI:57792"/>
    </ligand>
</feature>
<feature type="binding site" evidence="1">
    <location>
        <position position="152"/>
    </location>
    <ligand>
        <name>1-deoxy-D-xylulose 5-phosphate</name>
        <dbReference type="ChEBI" id="CHEBI:57792"/>
    </ligand>
</feature>
<feature type="binding site" evidence="1">
    <location>
        <position position="152"/>
    </location>
    <ligand>
        <name>Mn(2+)</name>
        <dbReference type="ChEBI" id="CHEBI:29035"/>
    </ligand>
</feature>
<feature type="binding site" evidence="1">
    <location>
        <position position="186"/>
    </location>
    <ligand>
        <name>1-deoxy-D-xylulose 5-phosphate</name>
        <dbReference type="ChEBI" id="CHEBI:57792"/>
    </ligand>
</feature>
<feature type="binding site" evidence="1">
    <location>
        <position position="209"/>
    </location>
    <ligand>
        <name>1-deoxy-D-xylulose 5-phosphate</name>
        <dbReference type="ChEBI" id="CHEBI:57792"/>
    </ligand>
</feature>
<feature type="binding site" evidence="1">
    <location>
        <position position="215"/>
    </location>
    <ligand>
        <name>NADPH</name>
        <dbReference type="ChEBI" id="CHEBI:57783"/>
    </ligand>
</feature>
<feature type="binding site" evidence="1">
    <location>
        <position position="222"/>
    </location>
    <ligand>
        <name>1-deoxy-D-xylulose 5-phosphate</name>
        <dbReference type="ChEBI" id="CHEBI:57792"/>
    </ligand>
</feature>
<feature type="binding site" evidence="1">
    <location>
        <position position="227"/>
    </location>
    <ligand>
        <name>1-deoxy-D-xylulose 5-phosphate</name>
        <dbReference type="ChEBI" id="CHEBI:57792"/>
    </ligand>
</feature>
<feature type="binding site" evidence="1">
    <location>
        <position position="228"/>
    </location>
    <ligand>
        <name>1-deoxy-D-xylulose 5-phosphate</name>
        <dbReference type="ChEBI" id="CHEBI:57792"/>
    </ligand>
</feature>
<feature type="binding site" evidence="1">
    <location>
        <position position="231"/>
    </location>
    <ligand>
        <name>1-deoxy-D-xylulose 5-phosphate</name>
        <dbReference type="ChEBI" id="CHEBI:57792"/>
    </ligand>
</feature>
<feature type="binding site" evidence="1">
    <location>
        <position position="231"/>
    </location>
    <ligand>
        <name>Mn(2+)</name>
        <dbReference type="ChEBI" id="CHEBI:29035"/>
    </ligand>
</feature>
<name>DXR_BUCAI</name>
<reference key="1">
    <citation type="journal article" date="2000" name="Nature">
        <title>Genome sequence of the endocellular bacterial symbiont of aphids Buchnera sp. APS.</title>
        <authorList>
            <person name="Shigenobu S."/>
            <person name="Watanabe H."/>
            <person name="Hattori M."/>
            <person name="Sakaki Y."/>
            <person name="Ishikawa H."/>
        </authorList>
    </citation>
    <scope>NUCLEOTIDE SEQUENCE [LARGE SCALE GENOMIC DNA]</scope>
    <source>
        <strain>APS</strain>
    </source>
</reference>
<comment type="function">
    <text evidence="1">Catalyzes the NADPH-dependent rearrangement and reduction of 1-deoxy-D-xylulose-5-phosphate (DXP) to 2-C-methyl-D-erythritol 4-phosphate (MEP).</text>
</comment>
<comment type="catalytic activity">
    <reaction evidence="1">
        <text>2-C-methyl-D-erythritol 4-phosphate + NADP(+) = 1-deoxy-D-xylulose 5-phosphate + NADPH + H(+)</text>
        <dbReference type="Rhea" id="RHEA:13717"/>
        <dbReference type="ChEBI" id="CHEBI:15378"/>
        <dbReference type="ChEBI" id="CHEBI:57783"/>
        <dbReference type="ChEBI" id="CHEBI:57792"/>
        <dbReference type="ChEBI" id="CHEBI:58262"/>
        <dbReference type="ChEBI" id="CHEBI:58349"/>
        <dbReference type="EC" id="1.1.1.267"/>
    </reaction>
    <physiologicalReaction direction="right-to-left" evidence="1">
        <dbReference type="Rhea" id="RHEA:13719"/>
    </physiologicalReaction>
</comment>
<comment type="cofactor">
    <cofactor evidence="1">
        <name>Mg(2+)</name>
        <dbReference type="ChEBI" id="CHEBI:18420"/>
    </cofactor>
    <cofactor evidence="1">
        <name>Mn(2+)</name>
        <dbReference type="ChEBI" id="CHEBI:29035"/>
    </cofactor>
</comment>
<comment type="pathway">
    <text evidence="1">Isoprenoid biosynthesis; isopentenyl diphosphate biosynthesis via DXP pathway; isopentenyl diphosphate from 1-deoxy-D-xylulose 5-phosphate: step 1/6.</text>
</comment>
<comment type="subunit">
    <text evidence="1">Homodimer.</text>
</comment>
<comment type="similarity">
    <text evidence="1">Belongs to the DXR family.</text>
</comment>
<proteinExistence type="inferred from homology"/>
<gene>
    <name evidence="1" type="primary">dxr</name>
    <name type="ordered locus">BU235</name>
</gene>
<protein>
    <recommendedName>
        <fullName evidence="1">1-deoxy-D-xylulose 5-phosphate reductoisomerase</fullName>
        <shortName evidence="1">DXP reductoisomerase</shortName>
        <ecNumber evidence="1">1.1.1.267</ecNumber>
    </recommendedName>
    <alternativeName>
        <fullName evidence="1">1-deoxyxylulose-5-phosphate reductoisomerase</fullName>
    </alternativeName>
    <alternativeName>
        <fullName evidence="1">2-C-methyl-D-erythritol 4-phosphate synthase</fullName>
    </alternativeName>
</protein>
<evidence type="ECO:0000255" key="1">
    <source>
        <dbReference type="HAMAP-Rule" id="MF_00183"/>
    </source>
</evidence>